<keyword id="KW-0004">4Fe-4S</keyword>
<keyword id="KW-0963">Cytoplasm</keyword>
<keyword id="KW-1015">Disulfide bond</keyword>
<keyword id="KW-0408">Iron</keyword>
<keyword id="KW-0411">Iron-sulfur</keyword>
<keyword id="KW-0479">Metal-binding</keyword>
<keyword id="KW-0489">Methyltransferase</keyword>
<keyword id="KW-1185">Reference proteome</keyword>
<keyword id="KW-0698">rRNA processing</keyword>
<keyword id="KW-0949">S-adenosyl-L-methionine</keyword>
<keyword id="KW-0808">Transferase</keyword>
<keyword id="KW-0819">tRNA processing</keyword>
<accession>Q3A2Z4</accession>
<protein>
    <recommendedName>
        <fullName evidence="1">Dual-specificity RNA methyltransferase RlmN</fullName>
        <ecNumber evidence="1">2.1.1.192</ecNumber>
    </recommendedName>
    <alternativeName>
        <fullName evidence="1">23S rRNA (adenine(2503)-C(2))-methyltransferase</fullName>
    </alternativeName>
    <alternativeName>
        <fullName evidence="1">23S rRNA m2A2503 methyltransferase</fullName>
    </alternativeName>
    <alternativeName>
        <fullName evidence="1">Ribosomal RNA large subunit methyltransferase N</fullName>
    </alternativeName>
    <alternativeName>
        <fullName evidence="1">tRNA (adenine(37)-C(2))-methyltransferase</fullName>
    </alternativeName>
    <alternativeName>
        <fullName evidence="1">tRNA m2A37 methyltransferase</fullName>
    </alternativeName>
</protein>
<gene>
    <name evidence="1" type="primary">rlmN</name>
    <name type="ordered locus">Pcar_2022</name>
</gene>
<feature type="chain" id="PRO_0000350301" description="Dual-specificity RNA methyltransferase RlmN">
    <location>
        <begin position="1"/>
        <end position="371"/>
    </location>
</feature>
<feature type="domain" description="Radical SAM core" evidence="2">
    <location>
        <begin position="106"/>
        <end position="333"/>
    </location>
</feature>
<feature type="region of interest" description="Disordered" evidence="3">
    <location>
        <begin position="345"/>
        <end position="371"/>
    </location>
</feature>
<feature type="compositionally biased region" description="Basic and acidic residues" evidence="3">
    <location>
        <begin position="353"/>
        <end position="365"/>
    </location>
</feature>
<feature type="active site" description="Proton acceptor" evidence="1">
    <location>
        <position position="99"/>
    </location>
</feature>
<feature type="active site" description="S-methylcysteine intermediate" evidence="1">
    <location>
        <position position="338"/>
    </location>
</feature>
<feature type="binding site" evidence="1">
    <location>
        <position position="120"/>
    </location>
    <ligand>
        <name>[4Fe-4S] cluster</name>
        <dbReference type="ChEBI" id="CHEBI:49883"/>
        <note>4Fe-4S-S-AdoMet</note>
    </ligand>
</feature>
<feature type="binding site" evidence="1">
    <location>
        <position position="124"/>
    </location>
    <ligand>
        <name>[4Fe-4S] cluster</name>
        <dbReference type="ChEBI" id="CHEBI:49883"/>
        <note>4Fe-4S-S-AdoMet</note>
    </ligand>
</feature>
<feature type="binding site" evidence="1">
    <location>
        <position position="127"/>
    </location>
    <ligand>
        <name>[4Fe-4S] cluster</name>
        <dbReference type="ChEBI" id="CHEBI:49883"/>
        <note>4Fe-4S-S-AdoMet</note>
    </ligand>
</feature>
<feature type="binding site" evidence="1">
    <location>
        <begin position="165"/>
        <end position="166"/>
    </location>
    <ligand>
        <name>S-adenosyl-L-methionine</name>
        <dbReference type="ChEBI" id="CHEBI:59789"/>
    </ligand>
</feature>
<feature type="binding site" evidence="1">
    <location>
        <position position="197"/>
    </location>
    <ligand>
        <name>S-adenosyl-L-methionine</name>
        <dbReference type="ChEBI" id="CHEBI:59789"/>
    </ligand>
</feature>
<feature type="binding site" evidence="1">
    <location>
        <begin position="219"/>
        <end position="221"/>
    </location>
    <ligand>
        <name>S-adenosyl-L-methionine</name>
        <dbReference type="ChEBI" id="CHEBI:59789"/>
    </ligand>
</feature>
<feature type="binding site" evidence="1">
    <location>
        <position position="295"/>
    </location>
    <ligand>
        <name>S-adenosyl-L-methionine</name>
        <dbReference type="ChEBI" id="CHEBI:59789"/>
    </ligand>
</feature>
<feature type="disulfide bond" description="(transient)" evidence="1">
    <location>
        <begin position="113"/>
        <end position="338"/>
    </location>
</feature>
<comment type="function">
    <text evidence="1">Specifically methylates position 2 of adenine 2503 in 23S rRNA and position 2 of adenine 37 in tRNAs. m2A2503 modification seems to play a crucial role in the proofreading step occurring at the peptidyl transferase center and thus would serve to optimize ribosomal fidelity.</text>
</comment>
<comment type="catalytic activity">
    <reaction evidence="1">
        <text>adenosine(2503) in 23S rRNA + 2 reduced [2Fe-2S]-[ferredoxin] + 2 S-adenosyl-L-methionine = 2-methyladenosine(2503) in 23S rRNA + 5'-deoxyadenosine + L-methionine + 2 oxidized [2Fe-2S]-[ferredoxin] + S-adenosyl-L-homocysteine</text>
        <dbReference type="Rhea" id="RHEA:42916"/>
        <dbReference type="Rhea" id="RHEA-COMP:10000"/>
        <dbReference type="Rhea" id="RHEA-COMP:10001"/>
        <dbReference type="Rhea" id="RHEA-COMP:10152"/>
        <dbReference type="Rhea" id="RHEA-COMP:10282"/>
        <dbReference type="ChEBI" id="CHEBI:17319"/>
        <dbReference type="ChEBI" id="CHEBI:33737"/>
        <dbReference type="ChEBI" id="CHEBI:33738"/>
        <dbReference type="ChEBI" id="CHEBI:57844"/>
        <dbReference type="ChEBI" id="CHEBI:57856"/>
        <dbReference type="ChEBI" id="CHEBI:59789"/>
        <dbReference type="ChEBI" id="CHEBI:74411"/>
        <dbReference type="ChEBI" id="CHEBI:74497"/>
        <dbReference type="EC" id="2.1.1.192"/>
    </reaction>
</comment>
<comment type="catalytic activity">
    <reaction evidence="1">
        <text>adenosine(37) in tRNA + 2 reduced [2Fe-2S]-[ferredoxin] + 2 S-adenosyl-L-methionine = 2-methyladenosine(37) in tRNA + 5'-deoxyadenosine + L-methionine + 2 oxidized [2Fe-2S]-[ferredoxin] + S-adenosyl-L-homocysteine</text>
        <dbReference type="Rhea" id="RHEA:43332"/>
        <dbReference type="Rhea" id="RHEA-COMP:10000"/>
        <dbReference type="Rhea" id="RHEA-COMP:10001"/>
        <dbReference type="Rhea" id="RHEA-COMP:10162"/>
        <dbReference type="Rhea" id="RHEA-COMP:10485"/>
        <dbReference type="ChEBI" id="CHEBI:17319"/>
        <dbReference type="ChEBI" id="CHEBI:33737"/>
        <dbReference type="ChEBI" id="CHEBI:33738"/>
        <dbReference type="ChEBI" id="CHEBI:57844"/>
        <dbReference type="ChEBI" id="CHEBI:57856"/>
        <dbReference type="ChEBI" id="CHEBI:59789"/>
        <dbReference type="ChEBI" id="CHEBI:74411"/>
        <dbReference type="ChEBI" id="CHEBI:74497"/>
        <dbReference type="EC" id="2.1.1.192"/>
    </reaction>
</comment>
<comment type="cofactor">
    <cofactor evidence="1">
        <name>[4Fe-4S] cluster</name>
        <dbReference type="ChEBI" id="CHEBI:49883"/>
    </cofactor>
    <text evidence="1">Binds 1 [4Fe-4S] cluster. The cluster is coordinated with 3 cysteines and an exchangeable S-adenosyl-L-methionine.</text>
</comment>
<comment type="subcellular location">
    <subcellularLocation>
        <location evidence="1">Cytoplasm</location>
    </subcellularLocation>
</comment>
<comment type="miscellaneous">
    <text evidence="1">Reaction proceeds by a ping-pong mechanism involving intermediate methylation of a conserved cysteine residue.</text>
</comment>
<comment type="similarity">
    <text evidence="1">Belongs to the radical SAM superfamily. RlmN family.</text>
</comment>
<evidence type="ECO:0000255" key="1">
    <source>
        <dbReference type="HAMAP-Rule" id="MF_01849"/>
    </source>
</evidence>
<evidence type="ECO:0000255" key="2">
    <source>
        <dbReference type="PROSITE-ProRule" id="PRU01266"/>
    </source>
</evidence>
<evidence type="ECO:0000256" key="3">
    <source>
        <dbReference type="SAM" id="MobiDB-lite"/>
    </source>
</evidence>
<sequence length="371" mass="41752">MDVSMDQDTRIDLKNFTLEELTEFLAGMGKERFRAGQVMRWMYHRLVDDFDAMSDLSKVLRAELHQRARISRLTPEATEDSRDGTRKYLFRLEDGETIESVRIPMDDNRATLCISTQVGCAMGCVFCHTGSFGLVRNLTPGEIVNQVCAALADGPVNNIVLMGMGEPLHNLDNVVKALQILYMPQGLDYSPRKVTLSTAGLVPQMQELGKRVRVNLAVSLNATTDEVRNRLMPVNQRYPLQQLMAACRQYPLHAKKRITFEYILIRDVNDSDQDARRLVKLLHGIKAKVNIIPFNEHSASEFRAPTEERISRFQGYLLDHGMVAIRRASKGQDISAACGQLKGKLTVSPPAQESERNSARPDRSQGKGKHL</sequence>
<organism>
    <name type="scientific">Syntrophotalea carbinolica (strain DSM 2380 / NBRC 103641 / GraBd1)</name>
    <name type="common">Pelobacter carbinolicus</name>
    <dbReference type="NCBI Taxonomy" id="338963"/>
    <lineage>
        <taxon>Bacteria</taxon>
        <taxon>Pseudomonadati</taxon>
        <taxon>Thermodesulfobacteriota</taxon>
        <taxon>Desulfuromonadia</taxon>
        <taxon>Desulfuromonadales</taxon>
        <taxon>Syntrophotaleaceae</taxon>
        <taxon>Syntrophotalea</taxon>
    </lineage>
</organism>
<dbReference type="EC" id="2.1.1.192" evidence="1"/>
<dbReference type="EMBL" id="CP000142">
    <property type="protein sequence ID" value="ABA89263.1"/>
    <property type="molecule type" value="Genomic_DNA"/>
</dbReference>
<dbReference type="SMR" id="Q3A2Z4"/>
<dbReference type="STRING" id="338963.Pcar_2022"/>
<dbReference type="KEGG" id="pca:Pcar_2022"/>
<dbReference type="eggNOG" id="COG0820">
    <property type="taxonomic scope" value="Bacteria"/>
</dbReference>
<dbReference type="HOGENOM" id="CLU_029101_2_0_7"/>
<dbReference type="OrthoDB" id="9793973at2"/>
<dbReference type="Proteomes" id="UP000002534">
    <property type="component" value="Chromosome"/>
</dbReference>
<dbReference type="GO" id="GO:0005737">
    <property type="term" value="C:cytoplasm"/>
    <property type="evidence" value="ECO:0007669"/>
    <property type="project" value="UniProtKB-SubCell"/>
</dbReference>
<dbReference type="GO" id="GO:0051539">
    <property type="term" value="F:4 iron, 4 sulfur cluster binding"/>
    <property type="evidence" value="ECO:0007669"/>
    <property type="project" value="UniProtKB-UniRule"/>
</dbReference>
<dbReference type="GO" id="GO:0046872">
    <property type="term" value="F:metal ion binding"/>
    <property type="evidence" value="ECO:0007669"/>
    <property type="project" value="UniProtKB-KW"/>
</dbReference>
<dbReference type="GO" id="GO:0070040">
    <property type="term" value="F:rRNA (adenine(2503)-C2-)-methyltransferase activity"/>
    <property type="evidence" value="ECO:0007669"/>
    <property type="project" value="UniProtKB-UniRule"/>
</dbReference>
<dbReference type="GO" id="GO:0019843">
    <property type="term" value="F:rRNA binding"/>
    <property type="evidence" value="ECO:0007669"/>
    <property type="project" value="UniProtKB-UniRule"/>
</dbReference>
<dbReference type="GO" id="GO:0002935">
    <property type="term" value="F:tRNA (adenine(37)-C2)-methyltransferase activity"/>
    <property type="evidence" value="ECO:0007669"/>
    <property type="project" value="UniProtKB-UniRule"/>
</dbReference>
<dbReference type="GO" id="GO:0000049">
    <property type="term" value="F:tRNA binding"/>
    <property type="evidence" value="ECO:0007669"/>
    <property type="project" value="UniProtKB-UniRule"/>
</dbReference>
<dbReference type="GO" id="GO:0070475">
    <property type="term" value="P:rRNA base methylation"/>
    <property type="evidence" value="ECO:0007669"/>
    <property type="project" value="UniProtKB-UniRule"/>
</dbReference>
<dbReference type="GO" id="GO:0030488">
    <property type="term" value="P:tRNA methylation"/>
    <property type="evidence" value="ECO:0007669"/>
    <property type="project" value="UniProtKB-UniRule"/>
</dbReference>
<dbReference type="CDD" id="cd01335">
    <property type="entry name" value="Radical_SAM"/>
    <property type="match status" value="1"/>
</dbReference>
<dbReference type="FunFam" id="1.10.150.530:FF:000003">
    <property type="entry name" value="Dual-specificity RNA methyltransferase RlmN"/>
    <property type="match status" value="1"/>
</dbReference>
<dbReference type="FunFam" id="3.20.20.70:FF:000014">
    <property type="entry name" value="Probable dual-specificity RNA methyltransferase RlmN"/>
    <property type="match status" value="1"/>
</dbReference>
<dbReference type="Gene3D" id="1.10.150.530">
    <property type="match status" value="1"/>
</dbReference>
<dbReference type="Gene3D" id="3.20.20.70">
    <property type="entry name" value="Aldolase class I"/>
    <property type="match status" value="1"/>
</dbReference>
<dbReference type="HAMAP" id="MF_01849">
    <property type="entry name" value="RNA_methyltr_RlmN"/>
    <property type="match status" value="1"/>
</dbReference>
<dbReference type="InterPro" id="IPR013785">
    <property type="entry name" value="Aldolase_TIM"/>
</dbReference>
<dbReference type="InterPro" id="IPR040072">
    <property type="entry name" value="Methyltransferase_A"/>
</dbReference>
<dbReference type="InterPro" id="IPR048641">
    <property type="entry name" value="RlmN_N"/>
</dbReference>
<dbReference type="InterPro" id="IPR027492">
    <property type="entry name" value="RNA_MTrfase_RlmN"/>
</dbReference>
<dbReference type="InterPro" id="IPR004383">
    <property type="entry name" value="rRNA_lsu_MTrfase_RlmN/Cfr"/>
</dbReference>
<dbReference type="InterPro" id="IPR007197">
    <property type="entry name" value="rSAM"/>
</dbReference>
<dbReference type="NCBIfam" id="TIGR00048">
    <property type="entry name" value="rRNA_mod_RlmN"/>
    <property type="match status" value="1"/>
</dbReference>
<dbReference type="PANTHER" id="PTHR30544">
    <property type="entry name" value="23S RRNA METHYLTRANSFERASE"/>
    <property type="match status" value="1"/>
</dbReference>
<dbReference type="PANTHER" id="PTHR30544:SF5">
    <property type="entry name" value="RADICAL SAM CORE DOMAIN-CONTAINING PROTEIN"/>
    <property type="match status" value="1"/>
</dbReference>
<dbReference type="Pfam" id="PF04055">
    <property type="entry name" value="Radical_SAM"/>
    <property type="match status" value="1"/>
</dbReference>
<dbReference type="Pfam" id="PF21016">
    <property type="entry name" value="RlmN_N"/>
    <property type="match status" value="1"/>
</dbReference>
<dbReference type="PIRSF" id="PIRSF006004">
    <property type="entry name" value="CHP00048"/>
    <property type="match status" value="1"/>
</dbReference>
<dbReference type="SFLD" id="SFLDF00275">
    <property type="entry name" value="adenosine_C2_methyltransferase"/>
    <property type="match status" value="1"/>
</dbReference>
<dbReference type="SFLD" id="SFLDS00029">
    <property type="entry name" value="Radical_SAM"/>
    <property type="match status" value="1"/>
</dbReference>
<dbReference type="SUPFAM" id="SSF102114">
    <property type="entry name" value="Radical SAM enzymes"/>
    <property type="match status" value="1"/>
</dbReference>
<dbReference type="PROSITE" id="PS51918">
    <property type="entry name" value="RADICAL_SAM"/>
    <property type="match status" value="1"/>
</dbReference>
<name>RLMN_SYNC1</name>
<reference key="1">
    <citation type="submission" date="2005-10" db="EMBL/GenBank/DDBJ databases">
        <title>Complete sequence of Pelobacter carbinolicus DSM 2380.</title>
        <authorList>
            <person name="Copeland A."/>
            <person name="Lucas S."/>
            <person name="Lapidus A."/>
            <person name="Barry K."/>
            <person name="Detter J.C."/>
            <person name="Glavina T."/>
            <person name="Hammon N."/>
            <person name="Israni S."/>
            <person name="Pitluck S."/>
            <person name="Chertkov O."/>
            <person name="Schmutz J."/>
            <person name="Larimer F."/>
            <person name="Land M."/>
            <person name="Kyrpides N."/>
            <person name="Ivanova N."/>
            <person name="Richardson P."/>
        </authorList>
    </citation>
    <scope>NUCLEOTIDE SEQUENCE [LARGE SCALE GENOMIC DNA]</scope>
    <source>
        <strain>DSM 2380 / NBRC 103641 / GraBd1</strain>
    </source>
</reference>
<proteinExistence type="inferred from homology"/>